<organism>
    <name type="scientific">Xanthomonas campestris pv. campestris (strain ATCC 33913 / DSM 3586 / NCPPB 528 / LMG 568 / P 25)</name>
    <dbReference type="NCBI Taxonomy" id="190485"/>
    <lineage>
        <taxon>Bacteria</taxon>
        <taxon>Pseudomonadati</taxon>
        <taxon>Pseudomonadota</taxon>
        <taxon>Gammaproteobacteria</taxon>
        <taxon>Lysobacterales</taxon>
        <taxon>Lysobacteraceae</taxon>
        <taxon>Xanthomonas</taxon>
    </lineage>
</organism>
<dbReference type="EC" id="1.13.11.5" evidence="1"/>
<dbReference type="EMBL" id="AE008922">
    <property type="protein sequence ID" value="AAM39756.1"/>
    <property type="molecule type" value="Genomic_DNA"/>
</dbReference>
<dbReference type="RefSeq" id="NP_635832.1">
    <property type="nucleotide sequence ID" value="NC_003902.1"/>
</dbReference>
<dbReference type="SMR" id="Q8PDA2"/>
<dbReference type="STRING" id="190485.XCC0438"/>
<dbReference type="EnsemblBacteria" id="AAM39756">
    <property type="protein sequence ID" value="AAM39756"/>
    <property type="gene ID" value="XCC0438"/>
</dbReference>
<dbReference type="KEGG" id="xcc:XCC0438"/>
<dbReference type="PATRIC" id="fig|190485.4.peg.483"/>
<dbReference type="eggNOG" id="COG3508">
    <property type="taxonomic scope" value="Bacteria"/>
</dbReference>
<dbReference type="HOGENOM" id="CLU_027174_0_0_6"/>
<dbReference type="OrthoDB" id="9811253at2"/>
<dbReference type="UniPathway" id="UPA00139">
    <property type="reaction ID" value="UER00339"/>
</dbReference>
<dbReference type="Proteomes" id="UP000001010">
    <property type="component" value="Chromosome"/>
</dbReference>
<dbReference type="GO" id="GO:0004411">
    <property type="term" value="F:homogentisate 1,2-dioxygenase activity"/>
    <property type="evidence" value="ECO:0000318"/>
    <property type="project" value="GO_Central"/>
</dbReference>
<dbReference type="GO" id="GO:0005506">
    <property type="term" value="F:iron ion binding"/>
    <property type="evidence" value="ECO:0007669"/>
    <property type="project" value="UniProtKB-UniRule"/>
</dbReference>
<dbReference type="GO" id="GO:0006559">
    <property type="term" value="P:L-phenylalanine catabolic process"/>
    <property type="evidence" value="ECO:0000318"/>
    <property type="project" value="GO_Central"/>
</dbReference>
<dbReference type="GO" id="GO:0006572">
    <property type="term" value="P:tyrosine catabolic process"/>
    <property type="evidence" value="ECO:0007669"/>
    <property type="project" value="UniProtKB-UniRule"/>
</dbReference>
<dbReference type="CDD" id="cd07000">
    <property type="entry name" value="cupin_HGO_N"/>
    <property type="match status" value="1"/>
</dbReference>
<dbReference type="FunFam" id="2.60.120.10:FF:000053">
    <property type="entry name" value="Homogentisate 1,2-dioxygenase"/>
    <property type="match status" value="1"/>
</dbReference>
<dbReference type="Gene3D" id="2.60.120.10">
    <property type="entry name" value="Jelly Rolls"/>
    <property type="match status" value="1"/>
</dbReference>
<dbReference type="HAMAP" id="MF_00334">
    <property type="entry name" value="Homogentis_dioxygen"/>
    <property type="match status" value="1"/>
</dbReference>
<dbReference type="InterPro" id="IPR046451">
    <property type="entry name" value="HgmA_C"/>
</dbReference>
<dbReference type="InterPro" id="IPR046452">
    <property type="entry name" value="HgmA_N"/>
</dbReference>
<dbReference type="InterPro" id="IPR005708">
    <property type="entry name" value="Homogentis_dOase"/>
</dbReference>
<dbReference type="InterPro" id="IPR022950">
    <property type="entry name" value="Homogentis_dOase_bac"/>
</dbReference>
<dbReference type="InterPro" id="IPR014710">
    <property type="entry name" value="RmlC-like_jellyroll"/>
</dbReference>
<dbReference type="InterPro" id="IPR011051">
    <property type="entry name" value="RmlC_Cupin_sf"/>
</dbReference>
<dbReference type="NCBIfam" id="TIGR01015">
    <property type="entry name" value="hmgA"/>
    <property type="match status" value="1"/>
</dbReference>
<dbReference type="PANTHER" id="PTHR11056">
    <property type="entry name" value="HOMOGENTISATE 1,2-DIOXYGENASE"/>
    <property type="match status" value="1"/>
</dbReference>
<dbReference type="PANTHER" id="PTHR11056:SF0">
    <property type="entry name" value="HOMOGENTISATE 1,2-DIOXYGENASE"/>
    <property type="match status" value="1"/>
</dbReference>
<dbReference type="Pfam" id="PF04209">
    <property type="entry name" value="HgmA_C"/>
    <property type="match status" value="1"/>
</dbReference>
<dbReference type="Pfam" id="PF20510">
    <property type="entry name" value="HgmA_N"/>
    <property type="match status" value="1"/>
</dbReference>
<dbReference type="SUPFAM" id="SSF51182">
    <property type="entry name" value="RmlC-like cupins"/>
    <property type="match status" value="1"/>
</dbReference>
<comment type="function">
    <text evidence="1">Involved in the catabolism of homogentisate (2,5-dihydroxyphenylacetate or 2,5-OH-PhAc), a central intermediate in the degradation of phenylalanine and tyrosine. Catalyzes the oxidative ring cleavage of the aromatic ring of homogentisate to yield maleylacetoacetate.</text>
</comment>
<comment type="catalytic activity">
    <reaction evidence="1">
        <text>homogentisate + O2 = 4-maleylacetoacetate + H(+)</text>
        <dbReference type="Rhea" id="RHEA:15449"/>
        <dbReference type="ChEBI" id="CHEBI:15378"/>
        <dbReference type="ChEBI" id="CHEBI:15379"/>
        <dbReference type="ChEBI" id="CHEBI:16169"/>
        <dbReference type="ChEBI" id="CHEBI:17105"/>
        <dbReference type="EC" id="1.13.11.5"/>
    </reaction>
</comment>
<comment type="cofactor">
    <cofactor evidence="1">
        <name>Fe cation</name>
        <dbReference type="ChEBI" id="CHEBI:24875"/>
    </cofactor>
</comment>
<comment type="pathway">
    <text evidence="1">Amino-acid degradation; L-phenylalanine degradation; acetoacetate and fumarate from L-phenylalanine: step 4/6.</text>
</comment>
<comment type="subunit">
    <text evidence="1">Hexamer; dimer of trimers.</text>
</comment>
<comment type="similarity">
    <text evidence="1">Belongs to the homogentisate dioxygenase family.</text>
</comment>
<gene>
    <name evidence="1" type="primary">hmgA</name>
    <name type="ordered locus">XCC0438</name>
</gene>
<feature type="chain" id="PRO_0000220258" description="Homogentisate 1,2-dioxygenase">
    <location>
        <begin position="1"/>
        <end position="455"/>
    </location>
</feature>
<feature type="active site" description="Proton acceptor" evidence="1">
    <location>
        <position position="308"/>
    </location>
</feature>
<feature type="binding site" evidence="1">
    <location>
        <position position="351"/>
    </location>
    <ligand>
        <name>Fe cation</name>
        <dbReference type="ChEBI" id="CHEBI:24875"/>
    </ligand>
</feature>
<feature type="binding site" evidence="1">
    <location>
        <position position="357"/>
    </location>
    <ligand>
        <name>Fe cation</name>
        <dbReference type="ChEBI" id="CHEBI:24875"/>
    </ligand>
</feature>
<feature type="binding site" evidence="1">
    <location>
        <position position="366"/>
    </location>
    <ligand>
        <name>homogentisate</name>
        <dbReference type="ChEBI" id="CHEBI:16169"/>
    </ligand>
</feature>
<feature type="binding site" evidence="1">
    <location>
        <position position="387"/>
    </location>
    <ligand>
        <name>Fe cation</name>
        <dbReference type="ChEBI" id="CHEBI:24875"/>
    </ligand>
</feature>
<feature type="binding site" evidence="1">
    <location>
        <position position="387"/>
    </location>
    <ligand>
        <name>homogentisate</name>
        <dbReference type="ChEBI" id="CHEBI:16169"/>
    </ligand>
</feature>
<protein>
    <recommendedName>
        <fullName evidence="1">Homogentisate 1,2-dioxygenase</fullName>
        <shortName evidence="1">HGDO</shortName>
        <ecNumber evidence="1">1.13.11.5</ecNumber>
    </recommendedName>
    <alternativeName>
        <fullName evidence="1">Homogentisate oxygenase</fullName>
    </alternativeName>
    <alternativeName>
        <fullName evidence="1">Homogentisic acid oxidase</fullName>
    </alternativeName>
    <alternativeName>
        <fullName evidence="1">Homogentisicase</fullName>
    </alternativeName>
</protein>
<keyword id="KW-0223">Dioxygenase</keyword>
<keyword id="KW-0408">Iron</keyword>
<keyword id="KW-0479">Metal-binding</keyword>
<keyword id="KW-0560">Oxidoreductase</keyword>
<keyword id="KW-0585">Phenylalanine catabolism</keyword>
<keyword id="KW-1185">Reference proteome</keyword>
<keyword id="KW-0828">Tyrosine catabolism</keyword>
<accession>Q8PDA2</accession>
<evidence type="ECO:0000255" key="1">
    <source>
        <dbReference type="HAMAP-Rule" id="MF_00334"/>
    </source>
</evidence>
<sequence>MIQLDPTLLLSWRAGQHPDAPMHNDQRYMTGFGNEFASEAVADTLPVGQNSPQRVAHGLYAEQLSGTAFTAPRGENRRSWLYRMRPAAVHGTFSLIEQSQFHNDFGHGPVPPDQLRWSPLPLPQTPTDFIDGLYTMAGNGSPEAMNGVAVHLYAANASMQDRFFYNADGELLLVPQLGRLRVHTELGMLELEPQQIGVIPRGVRFRVELRDGTARGYVCENFGGLLHLPDLGPIGSNGLANPRDFETPCAAFEQREGRFELVAKFQGHLWRADIGHSPLDVVAWHGNYAPYRYDLRRFNTIGSISFDHPDPSIFTVLTSPSDTHGTANMDFAIFPPRWLVAQHTFRPPWFHRNVASEFMGLVHGVYDAKADGFAPGGASLHNCMSGHGPDAATFDKASQADLSRPDVITETMAFMFETRAVLRPTAQALHAPHRQGDYQQCWAGLRKAFQAPPAS</sequence>
<name>HGD_XANCP</name>
<reference key="1">
    <citation type="journal article" date="2002" name="Nature">
        <title>Comparison of the genomes of two Xanthomonas pathogens with differing host specificities.</title>
        <authorList>
            <person name="da Silva A.C.R."/>
            <person name="Ferro J.A."/>
            <person name="Reinach F.C."/>
            <person name="Farah C.S."/>
            <person name="Furlan L.R."/>
            <person name="Quaggio R.B."/>
            <person name="Monteiro-Vitorello C.B."/>
            <person name="Van Sluys M.A."/>
            <person name="Almeida N.F. Jr."/>
            <person name="Alves L.M.C."/>
            <person name="do Amaral A.M."/>
            <person name="Bertolini M.C."/>
            <person name="Camargo L.E.A."/>
            <person name="Camarotte G."/>
            <person name="Cannavan F."/>
            <person name="Cardozo J."/>
            <person name="Chambergo F."/>
            <person name="Ciapina L.P."/>
            <person name="Cicarelli R.M.B."/>
            <person name="Coutinho L.L."/>
            <person name="Cursino-Santos J.R."/>
            <person name="El-Dorry H."/>
            <person name="Faria J.B."/>
            <person name="Ferreira A.J.S."/>
            <person name="Ferreira R.C.C."/>
            <person name="Ferro M.I.T."/>
            <person name="Formighieri E.F."/>
            <person name="Franco M.C."/>
            <person name="Greggio C.C."/>
            <person name="Gruber A."/>
            <person name="Katsuyama A.M."/>
            <person name="Kishi L.T."/>
            <person name="Leite R.P."/>
            <person name="Lemos E.G.M."/>
            <person name="Lemos M.V.F."/>
            <person name="Locali E.C."/>
            <person name="Machado M.A."/>
            <person name="Madeira A.M.B.N."/>
            <person name="Martinez-Rossi N.M."/>
            <person name="Martins E.C."/>
            <person name="Meidanis J."/>
            <person name="Menck C.F.M."/>
            <person name="Miyaki C.Y."/>
            <person name="Moon D.H."/>
            <person name="Moreira L.M."/>
            <person name="Novo M.T.M."/>
            <person name="Okura V.K."/>
            <person name="Oliveira M.C."/>
            <person name="Oliveira V.R."/>
            <person name="Pereira H.A."/>
            <person name="Rossi A."/>
            <person name="Sena J.A.D."/>
            <person name="Silva C."/>
            <person name="de Souza R.F."/>
            <person name="Spinola L.A.F."/>
            <person name="Takita M.A."/>
            <person name="Tamura R.E."/>
            <person name="Teixeira E.C."/>
            <person name="Tezza R.I.D."/>
            <person name="Trindade dos Santos M."/>
            <person name="Truffi D."/>
            <person name="Tsai S.M."/>
            <person name="White F.F."/>
            <person name="Setubal J.C."/>
            <person name="Kitajima J.P."/>
        </authorList>
    </citation>
    <scope>NUCLEOTIDE SEQUENCE [LARGE SCALE GENOMIC DNA]</scope>
    <source>
        <strain>ATCC 33913 / DSM 3586 / NCPPB 528 / LMG 568 / P 25</strain>
    </source>
</reference>
<proteinExistence type="inferred from homology"/>